<sequence length="180" mass="20511">MGLTISSLFSRLFGKKQMRILMVGLDAAGKTTILYKLKLGEIVTTIPTIGFNVETVEYKNICFTVWDVGGQDRIRPLWKHYFQNTQGLIFVVDSNDRERIQEVADELQKMLLVDELRDAVLLLFANKQDLPNAMAISEMTDKLGLQSLRNRTWYVQATCATQGTGLYEGLDWLSNELSKR</sequence>
<comment type="function">
    <text evidence="1 2">GTP-binding protein that functions as an allosteric activator of the cholera toxin catalytic subunit, an ADP-ribosyltransferase. Involved in protein trafficking; may modulate vesicle budding and uncoating within the Golgi apparatus (By similarity). Part of the ciliary targeting complex containing Rab11, ASAP1, Rabin8/RAB3IP, RAB11FIP3 and ARF4, which direct preciliary vesicle trafficking to mother centriole and ciliogenesis initiation (By similarity).</text>
</comment>
<comment type="subunit">
    <text evidence="2">Forms a complex containing RAB11A, ASAP1, RAB3IP, RAP11FIP3 and ARF4; the complex promotes preciliary trafficking; the complex binds to RHO in photoreceptor cells and promotes RHO ciliary transport.</text>
</comment>
<comment type="subcellular location">
    <subcellularLocation>
        <location evidence="2">Golgi apparatus</location>
    </subcellularLocation>
    <subcellularLocation>
        <location evidence="2">Membrane</location>
        <topology evidence="2">Lipid-anchor</topology>
    </subcellularLocation>
</comment>
<comment type="similarity">
    <text evidence="3">Belongs to the small GTPase superfamily. Arf family.</text>
</comment>
<dbReference type="EMBL" id="CR858319">
    <property type="protein sequence ID" value="CAH90556.1"/>
    <property type="molecule type" value="mRNA"/>
</dbReference>
<dbReference type="RefSeq" id="NP_001125296.1">
    <property type="nucleotide sequence ID" value="NM_001131824.1"/>
</dbReference>
<dbReference type="SMR" id="Q5RCF1"/>
<dbReference type="FunCoup" id="Q5RCF1">
    <property type="interactions" value="1722"/>
</dbReference>
<dbReference type="STRING" id="9601.ENSPPYP00000015403"/>
<dbReference type="GeneID" id="100172194"/>
<dbReference type="KEGG" id="pon:100172194"/>
<dbReference type="CTD" id="378"/>
<dbReference type="eggNOG" id="KOG0070">
    <property type="taxonomic scope" value="Eukaryota"/>
</dbReference>
<dbReference type="HOGENOM" id="CLU_040729_9_1_1"/>
<dbReference type="InParanoid" id="Q5RCF1"/>
<dbReference type="OrthoDB" id="2011769at2759"/>
<dbReference type="TreeFam" id="TF300808"/>
<dbReference type="Proteomes" id="UP000001595">
    <property type="component" value="Chromosome 3"/>
</dbReference>
<dbReference type="GO" id="GO:0000139">
    <property type="term" value="C:Golgi membrane"/>
    <property type="evidence" value="ECO:0000250"/>
    <property type="project" value="UniProtKB"/>
</dbReference>
<dbReference type="GO" id="GO:0005525">
    <property type="term" value="F:GTP binding"/>
    <property type="evidence" value="ECO:0007669"/>
    <property type="project" value="UniProtKB-KW"/>
</dbReference>
<dbReference type="GO" id="GO:0003924">
    <property type="term" value="F:GTPase activity"/>
    <property type="evidence" value="ECO:0007669"/>
    <property type="project" value="InterPro"/>
</dbReference>
<dbReference type="GO" id="GO:0015031">
    <property type="term" value="P:protein transport"/>
    <property type="evidence" value="ECO:0007669"/>
    <property type="project" value="UniProtKB-KW"/>
</dbReference>
<dbReference type="GO" id="GO:1902017">
    <property type="term" value="P:regulation of cilium assembly"/>
    <property type="evidence" value="ECO:0000250"/>
    <property type="project" value="UniProtKB"/>
</dbReference>
<dbReference type="GO" id="GO:0016192">
    <property type="term" value="P:vesicle-mediated transport"/>
    <property type="evidence" value="ECO:0007669"/>
    <property type="project" value="UniProtKB-KW"/>
</dbReference>
<dbReference type="CDD" id="cd04150">
    <property type="entry name" value="Arf1_5_like"/>
    <property type="match status" value="1"/>
</dbReference>
<dbReference type="FunFam" id="3.40.50.300:FF:000024">
    <property type="entry name" value="ADP-ribosylation factor 1"/>
    <property type="match status" value="1"/>
</dbReference>
<dbReference type="Gene3D" id="3.40.50.300">
    <property type="entry name" value="P-loop containing nucleotide triphosphate hydrolases"/>
    <property type="match status" value="1"/>
</dbReference>
<dbReference type="InterPro" id="IPR045872">
    <property type="entry name" value="Arf1-5-like"/>
</dbReference>
<dbReference type="InterPro" id="IPR027417">
    <property type="entry name" value="P-loop_NTPase"/>
</dbReference>
<dbReference type="InterPro" id="IPR005225">
    <property type="entry name" value="Small_GTP-bd"/>
</dbReference>
<dbReference type="InterPro" id="IPR024156">
    <property type="entry name" value="Small_GTPase_ARF"/>
</dbReference>
<dbReference type="InterPro" id="IPR006689">
    <property type="entry name" value="Small_GTPase_ARF/SAR"/>
</dbReference>
<dbReference type="NCBIfam" id="TIGR00231">
    <property type="entry name" value="small_GTP"/>
    <property type="match status" value="1"/>
</dbReference>
<dbReference type="PANTHER" id="PTHR11711">
    <property type="entry name" value="ADP RIBOSYLATION FACTOR-RELATED"/>
    <property type="match status" value="1"/>
</dbReference>
<dbReference type="Pfam" id="PF00025">
    <property type="entry name" value="Arf"/>
    <property type="match status" value="1"/>
</dbReference>
<dbReference type="PRINTS" id="PR00328">
    <property type="entry name" value="SAR1GTPBP"/>
</dbReference>
<dbReference type="SMART" id="SM00177">
    <property type="entry name" value="ARF"/>
    <property type="match status" value="1"/>
</dbReference>
<dbReference type="SMART" id="SM00175">
    <property type="entry name" value="RAB"/>
    <property type="match status" value="1"/>
</dbReference>
<dbReference type="SMART" id="SM00178">
    <property type="entry name" value="SAR"/>
    <property type="match status" value="1"/>
</dbReference>
<dbReference type="SUPFAM" id="SSF52540">
    <property type="entry name" value="P-loop containing nucleoside triphosphate hydrolases"/>
    <property type="match status" value="1"/>
</dbReference>
<dbReference type="PROSITE" id="PS51417">
    <property type="entry name" value="ARF"/>
    <property type="match status" value="1"/>
</dbReference>
<keyword id="KW-0931">ER-Golgi transport</keyword>
<keyword id="KW-0333">Golgi apparatus</keyword>
<keyword id="KW-0342">GTP-binding</keyword>
<keyword id="KW-0449">Lipoprotein</keyword>
<keyword id="KW-0472">Membrane</keyword>
<keyword id="KW-0519">Myristate</keyword>
<keyword id="KW-0547">Nucleotide-binding</keyword>
<keyword id="KW-0597">Phosphoprotein</keyword>
<keyword id="KW-0653">Protein transport</keyword>
<keyword id="KW-1185">Reference proteome</keyword>
<keyword id="KW-0813">Transport</keyword>
<proteinExistence type="evidence at transcript level"/>
<name>ARF4_PONAB</name>
<reference key="1">
    <citation type="submission" date="2004-11" db="EMBL/GenBank/DDBJ databases">
        <authorList>
            <consortium name="The German cDNA consortium"/>
        </authorList>
    </citation>
    <scope>NUCLEOTIDE SEQUENCE [LARGE SCALE MRNA]</scope>
    <source>
        <tissue>Heart</tissue>
    </source>
</reference>
<gene>
    <name type="primary">ARF4</name>
</gene>
<protein>
    <recommendedName>
        <fullName>ADP-ribosylation factor 4</fullName>
    </recommendedName>
</protein>
<feature type="initiator methionine" description="Removed" evidence="2">
    <location>
        <position position="1"/>
    </location>
</feature>
<feature type="chain" id="PRO_0000207393" description="ADP-ribosylation factor 4">
    <location>
        <begin position="2"/>
        <end position="180"/>
    </location>
</feature>
<feature type="binding site" evidence="1">
    <location>
        <begin position="24"/>
        <end position="31"/>
    </location>
    <ligand>
        <name>GTP</name>
        <dbReference type="ChEBI" id="CHEBI:37565"/>
    </ligand>
</feature>
<feature type="binding site" evidence="1">
    <location>
        <begin position="67"/>
        <end position="71"/>
    </location>
    <ligand>
        <name>GTP</name>
        <dbReference type="ChEBI" id="CHEBI:37565"/>
    </ligand>
</feature>
<feature type="binding site" evidence="1">
    <location>
        <begin position="126"/>
        <end position="129"/>
    </location>
    <ligand>
        <name>GTP</name>
        <dbReference type="ChEBI" id="CHEBI:37565"/>
    </ligand>
</feature>
<feature type="modified residue" description="Phosphoserine" evidence="2">
    <location>
        <position position="147"/>
    </location>
</feature>
<feature type="lipid moiety-binding region" description="N-myristoyl glycine" evidence="2">
    <location>
        <position position="2"/>
    </location>
</feature>
<accession>Q5RCF1</accession>
<organism>
    <name type="scientific">Pongo abelii</name>
    <name type="common">Sumatran orangutan</name>
    <name type="synonym">Pongo pygmaeus abelii</name>
    <dbReference type="NCBI Taxonomy" id="9601"/>
    <lineage>
        <taxon>Eukaryota</taxon>
        <taxon>Metazoa</taxon>
        <taxon>Chordata</taxon>
        <taxon>Craniata</taxon>
        <taxon>Vertebrata</taxon>
        <taxon>Euteleostomi</taxon>
        <taxon>Mammalia</taxon>
        <taxon>Eutheria</taxon>
        <taxon>Euarchontoglires</taxon>
        <taxon>Primates</taxon>
        <taxon>Haplorrhini</taxon>
        <taxon>Catarrhini</taxon>
        <taxon>Hominidae</taxon>
        <taxon>Pongo</taxon>
    </lineage>
</organism>
<evidence type="ECO:0000250" key="1"/>
<evidence type="ECO:0000250" key="2">
    <source>
        <dbReference type="UniProtKB" id="P18085"/>
    </source>
</evidence>
<evidence type="ECO:0000305" key="3"/>